<dbReference type="EC" id="1.2.1.10" evidence="1"/>
<dbReference type="EMBL" id="DQ146476">
    <property type="protein sequence ID" value="ACA01538.1"/>
    <property type="molecule type" value="Genomic_DNA"/>
</dbReference>
<dbReference type="PDB" id="7Z3S">
    <property type="method" value="X-ray"/>
    <property type="resolution" value="1.99 A"/>
    <property type="chains" value="A=1-294"/>
</dbReference>
<dbReference type="PDBsum" id="7Z3S"/>
<dbReference type="SMR" id="B0VXM6"/>
<dbReference type="GO" id="GO:0008774">
    <property type="term" value="F:acetaldehyde dehydrogenase (acetylating) activity"/>
    <property type="evidence" value="ECO:0007669"/>
    <property type="project" value="UniProtKB-UniRule"/>
</dbReference>
<dbReference type="GO" id="GO:0051287">
    <property type="term" value="F:NAD binding"/>
    <property type="evidence" value="ECO:0007669"/>
    <property type="project" value="UniProtKB-UniRule"/>
</dbReference>
<dbReference type="GO" id="GO:0009056">
    <property type="term" value="P:catabolic process"/>
    <property type="evidence" value="ECO:0007669"/>
    <property type="project" value="UniProtKB-KW"/>
</dbReference>
<dbReference type="CDD" id="cd23933">
    <property type="entry name" value="ALDH_C"/>
    <property type="match status" value="1"/>
</dbReference>
<dbReference type="Gene3D" id="3.30.360.10">
    <property type="entry name" value="Dihydrodipicolinate Reductase, domain 2"/>
    <property type="match status" value="1"/>
</dbReference>
<dbReference type="Gene3D" id="3.40.50.720">
    <property type="entry name" value="NAD(P)-binding Rossmann-like Domain"/>
    <property type="match status" value="1"/>
</dbReference>
<dbReference type="HAMAP" id="MF_01657">
    <property type="entry name" value="Ac_ald_DH_ac"/>
    <property type="match status" value="1"/>
</dbReference>
<dbReference type="InterPro" id="IPR003361">
    <property type="entry name" value="Acetaldehyde_dehydrogenase"/>
</dbReference>
<dbReference type="InterPro" id="IPR015426">
    <property type="entry name" value="Acetylaldehyde_DH_C"/>
</dbReference>
<dbReference type="InterPro" id="IPR036291">
    <property type="entry name" value="NAD(P)-bd_dom_sf"/>
</dbReference>
<dbReference type="InterPro" id="IPR000534">
    <property type="entry name" value="Semialdehyde_DH_NAD-bd"/>
</dbReference>
<dbReference type="NCBIfam" id="TIGR03215">
    <property type="entry name" value="ac_ald_DH_ac"/>
    <property type="match status" value="1"/>
</dbReference>
<dbReference type="NCBIfam" id="NF006157">
    <property type="entry name" value="PRK08300.1"/>
    <property type="match status" value="1"/>
</dbReference>
<dbReference type="Pfam" id="PF09290">
    <property type="entry name" value="AcetDehyd-dimer"/>
    <property type="match status" value="1"/>
</dbReference>
<dbReference type="Pfam" id="PF01118">
    <property type="entry name" value="Semialdhyde_dh"/>
    <property type="match status" value="1"/>
</dbReference>
<dbReference type="PIRSF" id="PIRSF015689">
    <property type="entry name" value="Actaldh_dh_actl"/>
    <property type="match status" value="1"/>
</dbReference>
<dbReference type="SMART" id="SM00859">
    <property type="entry name" value="Semialdhyde_dh"/>
    <property type="match status" value="1"/>
</dbReference>
<dbReference type="SUPFAM" id="SSF55347">
    <property type="entry name" value="Glyceraldehyde-3-phosphate dehydrogenase-like, C-terminal domain"/>
    <property type="match status" value="1"/>
</dbReference>
<dbReference type="SUPFAM" id="SSF51735">
    <property type="entry name" value="NAD(P)-binding Rossmann-fold domains"/>
    <property type="match status" value="1"/>
</dbReference>
<keyword id="KW-0002">3D-structure</keyword>
<keyword id="KW-0058">Aromatic hydrocarbons catabolism</keyword>
<keyword id="KW-0520">NAD</keyword>
<keyword id="KW-0560">Oxidoreductase</keyword>
<keyword id="KW-0614">Plasmid</keyword>
<name>ACDH_GEOSE</name>
<protein>
    <recommendedName>
        <fullName evidence="1">Acetaldehyde dehydrogenase</fullName>
        <ecNumber evidence="1">1.2.1.10</ecNumber>
    </recommendedName>
    <alternativeName>
        <fullName evidence="1">Acetaldehyde dehydrogenase [acetylating]</fullName>
    </alternativeName>
</protein>
<evidence type="ECO:0000255" key="1">
    <source>
        <dbReference type="HAMAP-Rule" id="MF_01657"/>
    </source>
</evidence>
<evidence type="ECO:0007829" key="2">
    <source>
        <dbReference type="PDB" id="7Z3S"/>
    </source>
</evidence>
<accession>B0VXM6</accession>
<comment type="catalytic activity">
    <reaction evidence="1">
        <text>acetaldehyde + NAD(+) + CoA = acetyl-CoA + NADH + H(+)</text>
        <dbReference type="Rhea" id="RHEA:23288"/>
        <dbReference type="ChEBI" id="CHEBI:15343"/>
        <dbReference type="ChEBI" id="CHEBI:15378"/>
        <dbReference type="ChEBI" id="CHEBI:57287"/>
        <dbReference type="ChEBI" id="CHEBI:57288"/>
        <dbReference type="ChEBI" id="CHEBI:57540"/>
        <dbReference type="ChEBI" id="CHEBI:57945"/>
        <dbReference type="EC" id="1.2.1.10"/>
    </reaction>
</comment>
<comment type="similarity">
    <text evidence="1">Belongs to the acetaldehyde dehydrogenase family.</text>
</comment>
<sequence length="294" mass="31478">MSKVKVAILGSGNIGTDLMMKLERSNILQLTAMIGIDPESDGLRRAKEKGYTVISTGIKGFLEQPELADIVFDATSAKAHIRHAKLLKEAGKTVLDLTPAAVGALVVPPVNLHKHLDEWNVNLITCGGQATIPIVHAINRVHPVGYAEIVATIASKSAGPGTRANIDEFTQTTARGIEKIGGAKKGKAIIILNPAEPPIMMRNTVYALVEEGKIDENAIVQSILEMVKTVQSYVPGYRIRTEPIMDGNKITVFLEVEGAGDYLPKYSGNLDIMTAAAVKVAEELAKHKLAAQTA</sequence>
<proteinExistence type="evidence at protein level"/>
<gene>
    <name type="primary">pheF</name>
</gene>
<reference key="1">
    <citation type="submission" date="2008-02" db="EMBL/GenBank/DDBJ databases">
        <title>Characterization of the phe-operon responsible for phenol degradation in Geobacillus stearothermophilus.</title>
        <authorList>
            <person name="Jaentges U.K."/>
            <person name="Omokoko B."/>
            <person name="Wilkening U."/>
            <person name="Reiss M."/>
            <person name="Zimmermann M."/>
            <person name="Hartmeier W."/>
        </authorList>
    </citation>
    <scope>NUCLEOTIDE SEQUENCE [GENOMIC DNA]</scope>
    <source>
        <strain>ATCC 67824 / DSM 6285 / BR219</strain>
    </source>
</reference>
<feature type="chain" id="PRO_0000387626" description="Acetaldehyde dehydrogenase">
    <location>
        <begin position="1"/>
        <end position="294"/>
    </location>
</feature>
<feature type="active site" description="Acyl-thioester intermediate" evidence="1">
    <location>
        <position position="126"/>
    </location>
</feature>
<feature type="binding site" evidence="1">
    <location>
        <begin position="11"/>
        <end position="14"/>
    </location>
    <ligand>
        <name>NAD(+)</name>
        <dbReference type="ChEBI" id="CHEBI:57540"/>
    </ligand>
</feature>
<feature type="binding site" evidence="1">
    <location>
        <begin position="157"/>
        <end position="165"/>
    </location>
    <ligand>
        <name>NAD(+)</name>
        <dbReference type="ChEBI" id="CHEBI:57540"/>
    </ligand>
</feature>
<feature type="binding site" evidence="1">
    <location>
        <position position="269"/>
    </location>
    <ligand>
        <name>NAD(+)</name>
        <dbReference type="ChEBI" id="CHEBI:57540"/>
    </ligand>
</feature>
<feature type="strand" evidence="2">
    <location>
        <begin position="4"/>
        <end position="9"/>
    </location>
</feature>
<feature type="helix" evidence="2">
    <location>
        <begin position="13"/>
        <end position="22"/>
    </location>
</feature>
<feature type="strand" evidence="2">
    <location>
        <begin position="26"/>
        <end position="34"/>
    </location>
</feature>
<feature type="helix" evidence="2">
    <location>
        <begin position="41"/>
        <end position="48"/>
    </location>
</feature>
<feature type="strand" evidence="2">
    <location>
        <begin position="52"/>
        <end position="54"/>
    </location>
</feature>
<feature type="helix" evidence="2">
    <location>
        <begin position="57"/>
        <end position="63"/>
    </location>
</feature>
<feature type="helix" evidence="2">
    <location>
        <begin position="65"/>
        <end position="67"/>
    </location>
</feature>
<feature type="strand" evidence="2">
    <location>
        <begin position="69"/>
        <end position="73"/>
    </location>
</feature>
<feature type="helix" evidence="2">
    <location>
        <begin position="77"/>
        <end position="89"/>
    </location>
</feature>
<feature type="strand" evidence="2">
    <location>
        <begin position="93"/>
        <end position="96"/>
    </location>
</feature>
<feature type="strand" evidence="2">
    <location>
        <begin position="103"/>
        <end position="105"/>
    </location>
</feature>
<feature type="turn" evidence="2">
    <location>
        <begin position="108"/>
        <end position="110"/>
    </location>
</feature>
<feature type="helix" evidence="2">
    <location>
        <begin position="112"/>
        <end position="114"/>
    </location>
</feature>
<feature type="strand" evidence="2">
    <location>
        <begin position="119"/>
        <end position="122"/>
    </location>
</feature>
<feature type="helix" evidence="2">
    <location>
        <begin position="126"/>
        <end position="139"/>
    </location>
</feature>
<feature type="strand" evidence="2">
    <location>
        <begin position="144"/>
        <end position="154"/>
    </location>
</feature>
<feature type="helix" evidence="2">
    <location>
        <begin position="165"/>
        <end position="179"/>
    </location>
</feature>
<feature type="strand" evidence="2">
    <location>
        <begin position="184"/>
        <end position="193"/>
    </location>
</feature>
<feature type="strand" evidence="2">
    <location>
        <begin position="201"/>
        <end position="209"/>
    </location>
</feature>
<feature type="helix" evidence="2">
    <location>
        <begin position="216"/>
        <end position="231"/>
    </location>
</feature>
<feature type="strand" evidence="2">
    <location>
        <begin position="237"/>
        <end position="241"/>
    </location>
</feature>
<feature type="strand" evidence="2">
    <location>
        <begin position="244"/>
        <end position="246"/>
    </location>
</feature>
<feature type="strand" evidence="2">
    <location>
        <begin position="249"/>
        <end position="256"/>
    </location>
</feature>
<feature type="strand" evidence="2">
    <location>
        <begin position="261"/>
        <end position="263"/>
    </location>
</feature>
<feature type="helix" evidence="2">
    <location>
        <begin position="268"/>
        <end position="291"/>
    </location>
</feature>
<geneLocation type="plasmid">
    <name>pGGO1</name>
</geneLocation>
<organism>
    <name type="scientific">Geobacillus stearothermophilus</name>
    <name type="common">Bacillus stearothermophilus</name>
    <dbReference type="NCBI Taxonomy" id="1422"/>
    <lineage>
        <taxon>Bacteria</taxon>
        <taxon>Bacillati</taxon>
        <taxon>Bacillota</taxon>
        <taxon>Bacilli</taxon>
        <taxon>Bacillales</taxon>
        <taxon>Anoxybacillaceae</taxon>
        <taxon>Geobacillus</taxon>
    </lineage>
</organism>